<gene>
    <name evidence="1" type="primary">cemA</name>
</gene>
<protein>
    <recommendedName>
        <fullName evidence="1">Potassium/proton antiporter CemA</fullName>
    </recommendedName>
    <alternativeName>
        <fullName evidence="1">Chloroplast envelope membrane protein A</fullName>
        <shortName evidence="1">CemA</shortName>
    </alternativeName>
</protein>
<sequence length="229" mass="26842">MPKRKALTPFPYLASIVFLPWGISLSFNKSLESWVINWWNTRQSETFLNDIQEKKVLERFIELEELFLLDEMIKEYSGTHIQKLRIGIYKETIQLVRMHNQDHIHLILHFSTNIICFTILSAYSILGNEELVILNSWVQEFLYNLSDTIKAFSILLLTDLCIGFHSPHGWELMIGLVYQNFGFAHNEQVISGLVSTFPVIIDTILKYWIFLFLNRVSPSLVVIYHSMNE</sequence>
<dbReference type="EMBL" id="EF380354">
    <property type="protein sequence ID" value="ABQ52531.1"/>
    <property type="molecule type" value="Genomic_DNA"/>
</dbReference>
<dbReference type="RefSeq" id="YP_001294282.1">
    <property type="nucleotide sequence ID" value="NC_009600.1"/>
</dbReference>
<dbReference type="GeneID" id="5236790"/>
<dbReference type="GO" id="GO:0009706">
    <property type="term" value="C:chloroplast inner membrane"/>
    <property type="evidence" value="ECO:0007669"/>
    <property type="project" value="UniProtKB-SubCell"/>
</dbReference>
<dbReference type="GO" id="GO:0015297">
    <property type="term" value="F:antiporter activity"/>
    <property type="evidence" value="ECO:0007669"/>
    <property type="project" value="UniProtKB-KW"/>
</dbReference>
<dbReference type="GO" id="GO:0015078">
    <property type="term" value="F:proton transmembrane transporter activity"/>
    <property type="evidence" value="ECO:0007669"/>
    <property type="project" value="UniProtKB-UniRule"/>
</dbReference>
<dbReference type="GO" id="GO:0006813">
    <property type="term" value="P:potassium ion transport"/>
    <property type="evidence" value="ECO:0007669"/>
    <property type="project" value="UniProtKB-UniRule"/>
</dbReference>
<dbReference type="HAMAP" id="MF_01308">
    <property type="entry name" value="CemA_PxcA"/>
    <property type="match status" value="1"/>
</dbReference>
<dbReference type="InterPro" id="IPR004282">
    <property type="entry name" value="CemA"/>
</dbReference>
<dbReference type="PANTHER" id="PTHR33650:SF2">
    <property type="entry name" value="CHLOROPLAST ENVELOPE MEMBRANE PROTEIN"/>
    <property type="match status" value="1"/>
</dbReference>
<dbReference type="PANTHER" id="PTHR33650">
    <property type="entry name" value="CHLOROPLAST ENVELOPE MEMBRANE PROTEIN-RELATED"/>
    <property type="match status" value="1"/>
</dbReference>
<dbReference type="Pfam" id="PF03040">
    <property type="entry name" value="CemA"/>
    <property type="match status" value="1"/>
</dbReference>
<organism>
    <name type="scientific">Illicium oligandrum</name>
    <name type="common">Star anise</name>
    <dbReference type="NCBI Taxonomy" id="145286"/>
    <lineage>
        <taxon>Eukaryota</taxon>
        <taxon>Viridiplantae</taxon>
        <taxon>Streptophyta</taxon>
        <taxon>Embryophyta</taxon>
        <taxon>Tracheophyta</taxon>
        <taxon>Spermatophyta</taxon>
        <taxon>Magnoliopsida</taxon>
        <taxon>Austrobaileyales</taxon>
        <taxon>Schisandraceae</taxon>
        <taxon>Illicium</taxon>
    </lineage>
</organism>
<keyword id="KW-0050">Antiport</keyword>
<keyword id="KW-0150">Chloroplast</keyword>
<keyword id="KW-0375">Hydrogen ion transport</keyword>
<keyword id="KW-0406">Ion transport</keyword>
<keyword id="KW-0472">Membrane</keyword>
<keyword id="KW-0934">Plastid</keyword>
<keyword id="KW-1001">Plastid inner membrane</keyword>
<keyword id="KW-0630">Potassium</keyword>
<keyword id="KW-0633">Potassium transport</keyword>
<keyword id="KW-0812">Transmembrane</keyword>
<keyword id="KW-1133">Transmembrane helix</keyword>
<keyword id="KW-0813">Transport</keyword>
<geneLocation type="chloroplast"/>
<proteinExistence type="inferred from homology"/>
<reference key="1">
    <citation type="journal article" date="2007" name="Mol. Phylogenet. Evol.">
        <title>Phylogenetic and evolutionary implications of complete chloroplast genome sequences of four early-diverging angiosperms: Buxus (Buxaceae), Chloranthus (Chloranthaceae), Dioscorea (Dioscoreaceae), and Illicium (Schisandraceae).</title>
        <authorList>
            <person name="Hansen D.R."/>
            <person name="Dastidar S.G."/>
            <person name="Cai Z."/>
            <person name="Penaflor C."/>
            <person name="Kuehl J.V."/>
            <person name="Boore J.L."/>
            <person name="Jansen R.K."/>
        </authorList>
    </citation>
    <scope>NUCLEOTIDE SEQUENCE [LARGE SCALE GENOMIC DNA]</scope>
</reference>
<feature type="chain" id="PRO_0000323244" description="Potassium/proton antiporter CemA">
    <location>
        <begin position="1"/>
        <end position="229"/>
    </location>
</feature>
<feature type="transmembrane region" description="Helical" evidence="1">
    <location>
        <begin position="7"/>
        <end position="27"/>
    </location>
</feature>
<feature type="transmembrane region" description="Helical" evidence="1">
    <location>
        <begin position="106"/>
        <end position="126"/>
    </location>
</feature>
<feature type="transmembrane region" description="Helical" evidence="1">
    <location>
        <begin position="193"/>
        <end position="213"/>
    </location>
</feature>
<evidence type="ECO:0000255" key="1">
    <source>
        <dbReference type="HAMAP-Rule" id="MF_01308"/>
    </source>
</evidence>
<evidence type="ECO:0000305" key="2"/>
<accession>A6MMV6</accession>
<comment type="function">
    <text evidence="1">Contributes to K(+)/H(+) antiport activity by supporting proton efflux to control proton extrusion and homeostasis in chloroplasts in a light-dependent manner to modulate photosynthesis. Prevents excessive induction of non-photochemical quenching (NPQ) under continuous-light conditions. Indirectly promotes efficient inorganic carbon uptake into chloroplasts.</text>
</comment>
<comment type="catalytic activity">
    <reaction evidence="1">
        <text>K(+)(in) + H(+)(out) = K(+)(out) + H(+)(in)</text>
        <dbReference type="Rhea" id="RHEA:29467"/>
        <dbReference type="ChEBI" id="CHEBI:15378"/>
        <dbReference type="ChEBI" id="CHEBI:29103"/>
    </reaction>
</comment>
<comment type="subcellular location">
    <subcellularLocation>
        <location evidence="1">Plastid</location>
        <location evidence="1">Chloroplast inner membrane</location>
        <topology evidence="1">Multi-pass membrane protein</topology>
    </subcellularLocation>
</comment>
<comment type="similarity">
    <text evidence="1 2">Belongs to the CemA family.</text>
</comment>
<name>CEMA_ILLOL</name>